<sequence>MLVWLAEHLVKYYSGFNVFSYLTFRAIVSLLTALFISLWMGPRMIAHLQKLSFGQVVRNDGPESHFSKRGTPTMGGIMILTAIVISVLLWAYPSNPYVWCVLVVLVGYGVIGFVDDYRKVVRKDTKGLIARWKYFWMSVIALGVAFALYLAGKDTPATQLVVPFFKDVMPQLGLFYILLAYFVIVGTGNAVNLTDGLDGLAIMPTVFVAGGFALVAWATGNMNFASYLHIPYLRHAGELVIVCTAIVGAGLGFLWFNTYPAQVFMGDVGSLALGGALGIIAVLLRQEFLLVIMGGVFVVETLSVILQVGSFKLRGQRIFRMAPIHHHYELKGWPEPRVIVRFWIISLMLVLIGLATLKVR</sequence>
<evidence type="ECO:0000255" key="1">
    <source>
        <dbReference type="HAMAP-Rule" id="MF_00038"/>
    </source>
</evidence>
<feature type="chain" id="PRO_1000116512" description="Phospho-N-acetylmuramoyl-pentapeptide-transferase">
    <location>
        <begin position="1"/>
        <end position="360"/>
    </location>
</feature>
<feature type="topological domain" description="Periplasmic" evidence="1">
    <location>
        <begin position="1"/>
        <end position="25"/>
    </location>
</feature>
<feature type="transmembrane region" description="Helical" evidence="1">
    <location>
        <begin position="26"/>
        <end position="46"/>
    </location>
</feature>
<feature type="topological domain" description="Cytoplasmic" evidence="1">
    <location>
        <begin position="47"/>
        <end position="71"/>
    </location>
</feature>
<feature type="transmembrane region" description="Helical" evidence="1">
    <location>
        <begin position="72"/>
        <end position="92"/>
    </location>
</feature>
<feature type="topological domain" description="Periplasmic" evidence="1">
    <location>
        <position position="93"/>
    </location>
</feature>
<feature type="transmembrane region" description="Helical" evidence="1">
    <location>
        <begin position="94"/>
        <end position="114"/>
    </location>
</feature>
<feature type="topological domain" description="Cytoplasmic" evidence="1">
    <location>
        <begin position="115"/>
        <end position="131"/>
    </location>
</feature>
<feature type="transmembrane region" description="Helical" evidence="1">
    <location>
        <begin position="132"/>
        <end position="152"/>
    </location>
</feature>
<feature type="topological domain" description="Periplasmic" evidence="1">
    <location>
        <begin position="153"/>
        <end position="167"/>
    </location>
</feature>
<feature type="transmembrane region" description="Helical" evidence="1">
    <location>
        <begin position="168"/>
        <end position="188"/>
    </location>
</feature>
<feature type="topological domain" description="Cytoplasmic" evidence="1">
    <location>
        <begin position="189"/>
        <end position="198"/>
    </location>
</feature>
<feature type="transmembrane region" description="Helical" evidence="1">
    <location>
        <begin position="199"/>
        <end position="219"/>
    </location>
</feature>
<feature type="topological domain" description="Periplasmic" evidence="1">
    <location>
        <begin position="220"/>
        <end position="235"/>
    </location>
</feature>
<feature type="transmembrane region" description="Helical" evidence="1">
    <location>
        <begin position="236"/>
        <end position="256"/>
    </location>
</feature>
<feature type="topological domain" description="Cytoplasmic" evidence="1">
    <location>
        <begin position="257"/>
        <end position="262"/>
    </location>
</feature>
<feature type="transmembrane region" description="Helical" evidence="1">
    <location>
        <begin position="263"/>
        <end position="283"/>
    </location>
</feature>
<feature type="topological domain" description="Periplasmic" evidence="1">
    <location>
        <begin position="284"/>
        <end position="287"/>
    </location>
</feature>
<feature type="transmembrane region" description="Helical" evidence="1">
    <location>
        <begin position="288"/>
        <end position="308"/>
    </location>
</feature>
<feature type="topological domain" description="Cytoplasmic" evidence="1">
    <location>
        <begin position="309"/>
        <end position="337"/>
    </location>
</feature>
<feature type="transmembrane region" description="Helical" evidence="1">
    <location>
        <begin position="338"/>
        <end position="358"/>
    </location>
</feature>
<feature type="topological domain" description="Periplasmic" evidence="1">
    <location>
        <begin position="359"/>
        <end position="360"/>
    </location>
</feature>
<keyword id="KW-0131">Cell cycle</keyword>
<keyword id="KW-0132">Cell division</keyword>
<keyword id="KW-0997">Cell inner membrane</keyword>
<keyword id="KW-1003">Cell membrane</keyword>
<keyword id="KW-0133">Cell shape</keyword>
<keyword id="KW-0961">Cell wall biogenesis/degradation</keyword>
<keyword id="KW-0460">Magnesium</keyword>
<keyword id="KW-0472">Membrane</keyword>
<keyword id="KW-0479">Metal-binding</keyword>
<keyword id="KW-0573">Peptidoglycan synthesis</keyword>
<keyword id="KW-1185">Reference proteome</keyword>
<keyword id="KW-0808">Transferase</keyword>
<keyword id="KW-0812">Transmembrane</keyword>
<keyword id="KW-1133">Transmembrane helix</keyword>
<comment type="function">
    <text evidence="1">Catalyzes the initial step of the lipid cycle reactions in the biosynthesis of the cell wall peptidoglycan: transfers peptidoglycan precursor phospho-MurNAc-pentapeptide from UDP-MurNAc-pentapeptide onto the lipid carrier undecaprenyl phosphate, yielding undecaprenyl-pyrophosphoryl-MurNAc-pentapeptide, known as lipid I.</text>
</comment>
<comment type="catalytic activity">
    <reaction evidence="1">
        <text>UDP-N-acetyl-alpha-D-muramoyl-L-alanyl-gamma-D-glutamyl-meso-2,6-diaminopimeloyl-D-alanyl-D-alanine + di-trans,octa-cis-undecaprenyl phosphate = di-trans,octa-cis-undecaprenyl diphospho-N-acetyl-alpha-D-muramoyl-L-alanyl-D-glutamyl-meso-2,6-diaminopimeloyl-D-alanyl-D-alanine + UMP</text>
        <dbReference type="Rhea" id="RHEA:28386"/>
        <dbReference type="ChEBI" id="CHEBI:57865"/>
        <dbReference type="ChEBI" id="CHEBI:60392"/>
        <dbReference type="ChEBI" id="CHEBI:61386"/>
        <dbReference type="ChEBI" id="CHEBI:61387"/>
        <dbReference type="EC" id="2.7.8.13"/>
    </reaction>
</comment>
<comment type="cofactor">
    <cofactor evidence="1">
        <name>Mg(2+)</name>
        <dbReference type="ChEBI" id="CHEBI:18420"/>
    </cofactor>
</comment>
<comment type="pathway">
    <text evidence="1">Cell wall biogenesis; peptidoglycan biosynthesis.</text>
</comment>
<comment type="subcellular location">
    <subcellularLocation>
        <location evidence="1">Cell inner membrane</location>
        <topology evidence="1">Multi-pass membrane protein</topology>
    </subcellularLocation>
</comment>
<comment type="similarity">
    <text evidence="1">Belongs to the glycosyltransferase 4 family. MraY subfamily.</text>
</comment>
<reference key="1">
    <citation type="journal article" date="2009" name="PLoS Genet.">
        <title>Organised genome dynamics in the Escherichia coli species results in highly diverse adaptive paths.</title>
        <authorList>
            <person name="Touchon M."/>
            <person name="Hoede C."/>
            <person name="Tenaillon O."/>
            <person name="Barbe V."/>
            <person name="Baeriswyl S."/>
            <person name="Bidet P."/>
            <person name="Bingen E."/>
            <person name="Bonacorsi S."/>
            <person name="Bouchier C."/>
            <person name="Bouvet O."/>
            <person name="Calteau A."/>
            <person name="Chiapello H."/>
            <person name="Clermont O."/>
            <person name="Cruveiller S."/>
            <person name="Danchin A."/>
            <person name="Diard M."/>
            <person name="Dossat C."/>
            <person name="Karoui M.E."/>
            <person name="Frapy E."/>
            <person name="Garry L."/>
            <person name="Ghigo J.M."/>
            <person name="Gilles A.M."/>
            <person name="Johnson J."/>
            <person name="Le Bouguenec C."/>
            <person name="Lescat M."/>
            <person name="Mangenot S."/>
            <person name="Martinez-Jehanne V."/>
            <person name="Matic I."/>
            <person name="Nassif X."/>
            <person name="Oztas S."/>
            <person name="Petit M.A."/>
            <person name="Pichon C."/>
            <person name="Rouy Z."/>
            <person name="Ruf C.S."/>
            <person name="Schneider D."/>
            <person name="Tourret J."/>
            <person name="Vacherie B."/>
            <person name="Vallenet D."/>
            <person name="Medigue C."/>
            <person name="Rocha E.P.C."/>
            <person name="Denamur E."/>
        </authorList>
    </citation>
    <scope>NUCLEOTIDE SEQUENCE [LARGE SCALE GENOMIC DNA]</scope>
    <source>
        <strain>S88 / ExPEC</strain>
    </source>
</reference>
<name>MRAY_ECO45</name>
<proteinExistence type="inferred from homology"/>
<organism>
    <name type="scientific">Escherichia coli O45:K1 (strain S88 / ExPEC)</name>
    <dbReference type="NCBI Taxonomy" id="585035"/>
    <lineage>
        <taxon>Bacteria</taxon>
        <taxon>Pseudomonadati</taxon>
        <taxon>Pseudomonadota</taxon>
        <taxon>Gammaproteobacteria</taxon>
        <taxon>Enterobacterales</taxon>
        <taxon>Enterobacteriaceae</taxon>
        <taxon>Escherichia</taxon>
    </lineage>
</organism>
<dbReference type="EC" id="2.7.8.13" evidence="1"/>
<dbReference type="EMBL" id="CU928161">
    <property type="protein sequence ID" value="CAR01456.1"/>
    <property type="molecule type" value="Genomic_DNA"/>
</dbReference>
<dbReference type="RefSeq" id="WP_000964131.1">
    <property type="nucleotide sequence ID" value="NC_011742.1"/>
</dbReference>
<dbReference type="SMR" id="B7MAL0"/>
<dbReference type="GeneID" id="93777347"/>
<dbReference type="KEGG" id="ecz:ECS88_0090"/>
<dbReference type="HOGENOM" id="CLU_023982_0_0_6"/>
<dbReference type="UniPathway" id="UPA00219"/>
<dbReference type="Proteomes" id="UP000000747">
    <property type="component" value="Chromosome"/>
</dbReference>
<dbReference type="GO" id="GO:0005886">
    <property type="term" value="C:plasma membrane"/>
    <property type="evidence" value="ECO:0007669"/>
    <property type="project" value="UniProtKB-SubCell"/>
</dbReference>
<dbReference type="GO" id="GO:0046872">
    <property type="term" value="F:metal ion binding"/>
    <property type="evidence" value="ECO:0007669"/>
    <property type="project" value="UniProtKB-KW"/>
</dbReference>
<dbReference type="GO" id="GO:0008963">
    <property type="term" value="F:phospho-N-acetylmuramoyl-pentapeptide-transferase activity"/>
    <property type="evidence" value="ECO:0007669"/>
    <property type="project" value="UniProtKB-UniRule"/>
</dbReference>
<dbReference type="GO" id="GO:0051992">
    <property type="term" value="F:UDP-N-acetylmuramoyl-L-alanyl-D-glutamyl-meso-2,6-diaminopimelyl-D-alanyl-D-alanine:undecaprenyl-phosphate transferase activity"/>
    <property type="evidence" value="ECO:0007669"/>
    <property type="project" value="RHEA"/>
</dbReference>
<dbReference type="GO" id="GO:0051301">
    <property type="term" value="P:cell division"/>
    <property type="evidence" value="ECO:0007669"/>
    <property type="project" value="UniProtKB-KW"/>
</dbReference>
<dbReference type="GO" id="GO:0071555">
    <property type="term" value="P:cell wall organization"/>
    <property type="evidence" value="ECO:0007669"/>
    <property type="project" value="UniProtKB-KW"/>
</dbReference>
<dbReference type="GO" id="GO:0009252">
    <property type="term" value="P:peptidoglycan biosynthetic process"/>
    <property type="evidence" value="ECO:0007669"/>
    <property type="project" value="UniProtKB-UniRule"/>
</dbReference>
<dbReference type="GO" id="GO:0008360">
    <property type="term" value="P:regulation of cell shape"/>
    <property type="evidence" value="ECO:0007669"/>
    <property type="project" value="UniProtKB-KW"/>
</dbReference>
<dbReference type="CDD" id="cd06852">
    <property type="entry name" value="GT_MraY"/>
    <property type="match status" value="1"/>
</dbReference>
<dbReference type="HAMAP" id="MF_00038">
    <property type="entry name" value="MraY"/>
    <property type="match status" value="1"/>
</dbReference>
<dbReference type="InterPro" id="IPR000715">
    <property type="entry name" value="Glycosyl_transferase_4"/>
</dbReference>
<dbReference type="InterPro" id="IPR003524">
    <property type="entry name" value="PNAcMuramoyl-5peptid_Trfase"/>
</dbReference>
<dbReference type="InterPro" id="IPR018480">
    <property type="entry name" value="PNAcMuramoyl-5peptid_Trfase_CS"/>
</dbReference>
<dbReference type="NCBIfam" id="TIGR00445">
    <property type="entry name" value="mraY"/>
    <property type="match status" value="1"/>
</dbReference>
<dbReference type="PANTHER" id="PTHR22926">
    <property type="entry name" value="PHOSPHO-N-ACETYLMURAMOYL-PENTAPEPTIDE-TRANSFERASE"/>
    <property type="match status" value="1"/>
</dbReference>
<dbReference type="PANTHER" id="PTHR22926:SF5">
    <property type="entry name" value="PHOSPHO-N-ACETYLMURAMOYL-PENTAPEPTIDE-TRANSFERASE HOMOLOG"/>
    <property type="match status" value="1"/>
</dbReference>
<dbReference type="Pfam" id="PF00953">
    <property type="entry name" value="Glycos_transf_4"/>
    <property type="match status" value="1"/>
</dbReference>
<dbReference type="Pfam" id="PF10555">
    <property type="entry name" value="MraY_sig1"/>
    <property type="match status" value="1"/>
</dbReference>
<dbReference type="PROSITE" id="PS01347">
    <property type="entry name" value="MRAY_1"/>
    <property type="match status" value="1"/>
</dbReference>
<dbReference type="PROSITE" id="PS01348">
    <property type="entry name" value="MRAY_2"/>
    <property type="match status" value="1"/>
</dbReference>
<protein>
    <recommendedName>
        <fullName evidence="1">Phospho-N-acetylmuramoyl-pentapeptide-transferase</fullName>
        <ecNumber evidence="1">2.7.8.13</ecNumber>
    </recommendedName>
    <alternativeName>
        <fullName evidence="1">UDP-MurNAc-pentapeptide phosphotransferase</fullName>
    </alternativeName>
</protein>
<gene>
    <name evidence="1" type="primary">mraY</name>
    <name type="ordered locus">ECS88_0090</name>
</gene>
<accession>B7MAL0</accession>